<reference key="1">
    <citation type="journal article" date="2006" name="Proc. Natl. Acad. Sci. U.S.A.">
        <title>Comparative genomics of the lactic acid bacteria.</title>
        <authorList>
            <person name="Makarova K.S."/>
            <person name="Slesarev A."/>
            <person name="Wolf Y.I."/>
            <person name="Sorokin A."/>
            <person name="Mirkin B."/>
            <person name="Koonin E.V."/>
            <person name="Pavlov A."/>
            <person name="Pavlova N."/>
            <person name="Karamychev V."/>
            <person name="Polouchine N."/>
            <person name="Shakhova V."/>
            <person name="Grigoriev I."/>
            <person name="Lou Y."/>
            <person name="Rohksar D."/>
            <person name="Lucas S."/>
            <person name="Huang K."/>
            <person name="Goodstein D.M."/>
            <person name="Hawkins T."/>
            <person name="Plengvidhya V."/>
            <person name="Welker D."/>
            <person name="Hughes J."/>
            <person name="Goh Y."/>
            <person name="Benson A."/>
            <person name="Baldwin K."/>
            <person name="Lee J.-H."/>
            <person name="Diaz-Muniz I."/>
            <person name="Dosti B."/>
            <person name="Smeianov V."/>
            <person name="Wechter W."/>
            <person name="Barabote R."/>
            <person name="Lorca G."/>
            <person name="Altermann E."/>
            <person name="Barrangou R."/>
            <person name="Ganesan B."/>
            <person name="Xie Y."/>
            <person name="Rawsthorne H."/>
            <person name="Tamir D."/>
            <person name="Parker C."/>
            <person name="Breidt F."/>
            <person name="Broadbent J.R."/>
            <person name="Hutkins R."/>
            <person name="O'Sullivan D."/>
            <person name="Steele J."/>
            <person name="Unlu G."/>
            <person name="Saier M.H. Jr."/>
            <person name="Klaenhammer T."/>
            <person name="Richardson P."/>
            <person name="Kozyavkin S."/>
            <person name="Weimer B.C."/>
            <person name="Mills D.A."/>
        </authorList>
    </citation>
    <scope>NUCLEOTIDE SEQUENCE [LARGE SCALE GENOMIC DNA]</scope>
    <source>
        <strain>ATCC 33323 / DSM 20243 / BCRC 14619 / CIP 102991 / JCM 1131 / KCTC 3163 / NCIMB 11718 / NCTC 13722 / AM63</strain>
    </source>
</reference>
<organism>
    <name type="scientific">Lactobacillus gasseri (strain ATCC 33323 / DSM 20243 / BCRC 14619 / CIP 102991 / JCM 1131 / KCTC 3163 / NCIMB 11718 / NCTC 13722 / AM63)</name>
    <dbReference type="NCBI Taxonomy" id="324831"/>
    <lineage>
        <taxon>Bacteria</taxon>
        <taxon>Bacillati</taxon>
        <taxon>Bacillota</taxon>
        <taxon>Bacilli</taxon>
        <taxon>Lactobacillales</taxon>
        <taxon>Lactobacillaceae</taxon>
        <taxon>Lactobacillus</taxon>
    </lineage>
</organism>
<evidence type="ECO:0000255" key="1">
    <source>
        <dbReference type="HAMAP-Rule" id="MF_01818"/>
    </source>
</evidence>
<feature type="chain" id="PRO_1000070288" description="Ribonuclease Z">
    <location>
        <begin position="1"/>
        <end position="309"/>
    </location>
</feature>
<feature type="active site" description="Proton acceptor" evidence="1">
    <location>
        <position position="67"/>
    </location>
</feature>
<feature type="binding site" evidence="1">
    <location>
        <position position="63"/>
    </location>
    <ligand>
        <name>Zn(2+)</name>
        <dbReference type="ChEBI" id="CHEBI:29105"/>
        <label>1</label>
        <note>catalytic</note>
    </ligand>
</feature>
<feature type="binding site" evidence="1">
    <location>
        <position position="65"/>
    </location>
    <ligand>
        <name>Zn(2+)</name>
        <dbReference type="ChEBI" id="CHEBI:29105"/>
        <label>1</label>
        <note>catalytic</note>
    </ligand>
</feature>
<feature type="binding site" evidence="1">
    <location>
        <position position="67"/>
    </location>
    <ligand>
        <name>Zn(2+)</name>
        <dbReference type="ChEBI" id="CHEBI:29105"/>
        <label>2</label>
        <note>catalytic</note>
    </ligand>
</feature>
<feature type="binding site" evidence="1">
    <location>
        <position position="68"/>
    </location>
    <ligand>
        <name>Zn(2+)</name>
        <dbReference type="ChEBI" id="CHEBI:29105"/>
        <label>2</label>
        <note>catalytic</note>
    </ligand>
</feature>
<feature type="binding site" evidence="1">
    <location>
        <position position="141"/>
    </location>
    <ligand>
        <name>Zn(2+)</name>
        <dbReference type="ChEBI" id="CHEBI:29105"/>
        <label>1</label>
        <note>catalytic</note>
    </ligand>
</feature>
<feature type="binding site" evidence="1">
    <location>
        <position position="212"/>
    </location>
    <ligand>
        <name>Zn(2+)</name>
        <dbReference type="ChEBI" id="CHEBI:29105"/>
        <label>1</label>
        <note>catalytic</note>
    </ligand>
</feature>
<feature type="binding site" evidence="1">
    <location>
        <position position="212"/>
    </location>
    <ligand>
        <name>Zn(2+)</name>
        <dbReference type="ChEBI" id="CHEBI:29105"/>
        <label>2</label>
        <note>catalytic</note>
    </ligand>
</feature>
<feature type="binding site" evidence="1">
    <location>
        <position position="270"/>
    </location>
    <ligand>
        <name>Zn(2+)</name>
        <dbReference type="ChEBI" id="CHEBI:29105"/>
        <label>2</label>
        <note>catalytic</note>
    </ligand>
</feature>
<sequence length="309" mass="34811">MEIQFLGTSAGQPSKSRNVSCTALKLLDELNEVWLFDVGEATQHQILKTNIRPRKVTRIFISHTHGDHIFGLPGFLSSRSFQGDGGPLTIYGPAGIEQFVQTSLKVSRTRVSYPIKYVVLKEDGLIFENNLFAVYTARLDHRVPSFGFRVVEKPRPGELLMDKVAEYNVPNGPLLGQLKAGKTITLSDGQKLDGRDFLGKERPGRVVTIIYDTRPTENIGKLADHADVLVHESTFNGDEEKMAHRYFHSTCLDAARIARDRHVRKLYLTHISARYTGKAGKELEHEARKIFKHTRLANDLDSFEITLRG</sequence>
<dbReference type="EC" id="3.1.26.11" evidence="1"/>
<dbReference type="EMBL" id="CP000413">
    <property type="protein sequence ID" value="ABJ60263.1"/>
    <property type="molecule type" value="Genomic_DNA"/>
</dbReference>
<dbReference type="RefSeq" id="WP_003647424.1">
    <property type="nucleotide sequence ID" value="NZ_WBMG01000010.1"/>
</dbReference>
<dbReference type="SMR" id="Q043V9"/>
<dbReference type="GeneID" id="29639978"/>
<dbReference type="KEGG" id="lga:LGAS_0874"/>
<dbReference type="HOGENOM" id="CLU_031317_2_0_9"/>
<dbReference type="BioCyc" id="LGAS324831:G1G6Y-867-MONOMER"/>
<dbReference type="Proteomes" id="UP000000664">
    <property type="component" value="Chromosome"/>
</dbReference>
<dbReference type="GO" id="GO:0042781">
    <property type="term" value="F:3'-tRNA processing endoribonuclease activity"/>
    <property type="evidence" value="ECO:0007669"/>
    <property type="project" value="UniProtKB-UniRule"/>
</dbReference>
<dbReference type="GO" id="GO:0008270">
    <property type="term" value="F:zinc ion binding"/>
    <property type="evidence" value="ECO:0007669"/>
    <property type="project" value="UniProtKB-UniRule"/>
</dbReference>
<dbReference type="CDD" id="cd07717">
    <property type="entry name" value="RNaseZ_ZiPD-like_MBL-fold"/>
    <property type="match status" value="1"/>
</dbReference>
<dbReference type="FunFam" id="3.60.15.10:FF:000002">
    <property type="entry name" value="Ribonuclease Z"/>
    <property type="match status" value="1"/>
</dbReference>
<dbReference type="Gene3D" id="3.60.15.10">
    <property type="entry name" value="Ribonuclease Z/Hydroxyacylglutathione hydrolase-like"/>
    <property type="match status" value="1"/>
</dbReference>
<dbReference type="HAMAP" id="MF_01818">
    <property type="entry name" value="RNase_Z_BN"/>
    <property type="match status" value="1"/>
</dbReference>
<dbReference type="InterPro" id="IPR001279">
    <property type="entry name" value="Metallo-B-lactamas"/>
</dbReference>
<dbReference type="InterPro" id="IPR036866">
    <property type="entry name" value="RibonucZ/Hydroxyglut_hydro"/>
</dbReference>
<dbReference type="InterPro" id="IPR013471">
    <property type="entry name" value="RNase_Z/BN"/>
</dbReference>
<dbReference type="NCBIfam" id="NF000801">
    <property type="entry name" value="PRK00055.1-3"/>
    <property type="match status" value="1"/>
</dbReference>
<dbReference type="NCBIfam" id="TIGR02651">
    <property type="entry name" value="RNase_Z"/>
    <property type="match status" value="1"/>
</dbReference>
<dbReference type="PANTHER" id="PTHR46018">
    <property type="entry name" value="ZINC PHOSPHODIESTERASE ELAC PROTEIN 1"/>
    <property type="match status" value="1"/>
</dbReference>
<dbReference type="PANTHER" id="PTHR46018:SF2">
    <property type="entry name" value="ZINC PHOSPHODIESTERASE ELAC PROTEIN 1"/>
    <property type="match status" value="1"/>
</dbReference>
<dbReference type="Pfam" id="PF00753">
    <property type="entry name" value="Lactamase_B"/>
    <property type="match status" value="1"/>
</dbReference>
<dbReference type="SUPFAM" id="SSF56281">
    <property type="entry name" value="Metallo-hydrolase/oxidoreductase"/>
    <property type="match status" value="1"/>
</dbReference>
<proteinExistence type="inferred from homology"/>
<gene>
    <name evidence="1" type="primary">rnz</name>
    <name type="ordered locus">LGAS_0874</name>
</gene>
<comment type="function">
    <text evidence="1">Zinc phosphodiesterase, which displays some tRNA 3'-processing endonuclease activity. Probably involved in tRNA maturation, by removing a 3'-trailer from precursor tRNA.</text>
</comment>
<comment type="catalytic activity">
    <reaction evidence="1">
        <text>Endonucleolytic cleavage of RNA, removing extra 3' nucleotides from tRNA precursor, generating 3' termini of tRNAs. A 3'-hydroxy group is left at the tRNA terminus and a 5'-phosphoryl group is left at the trailer molecule.</text>
        <dbReference type="EC" id="3.1.26.11"/>
    </reaction>
</comment>
<comment type="cofactor">
    <cofactor evidence="1">
        <name>Zn(2+)</name>
        <dbReference type="ChEBI" id="CHEBI:29105"/>
    </cofactor>
    <text evidence="1">Binds 2 Zn(2+) ions.</text>
</comment>
<comment type="subunit">
    <text evidence="1">Homodimer.</text>
</comment>
<comment type="similarity">
    <text evidence="1">Belongs to the RNase Z family.</text>
</comment>
<name>RNZ_LACGA</name>
<protein>
    <recommendedName>
        <fullName evidence="1">Ribonuclease Z</fullName>
        <shortName evidence="1">RNase Z</shortName>
        <ecNumber evidence="1">3.1.26.11</ecNumber>
    </recommendedName>
    <alternativeName>
        <fullName evidence="1">tRNA 3 endonuclease</fullName>
    </alternativeName>
    <alternativeName>
        <fullName evidence="1">tRNase Z</fullName>
    </alternativeName>
</protein>
<keyword id="KW-0255">Endonuclease</keyword>
<keyword id="KW-0378">Hydrolase</keyword>
<keyword id="KW-0479">Metal-binding</keyword>
<keyword id="KW-0540">Nuclease</keyword>
<keyword id="KW-0819">tRNA processing</keyword>
<keyword id="KW-0862">Zinc</keyword>
<accession>Q043V9</accession>